<name>MTNW_BACAN</name>
<accession>Q81MJ2</accession>
<accession>Q6HTZ2</accession>
<accession>Q6KN72</accession>
<organism>
    <name type="scientific">Bacillus anthracis</name>
    <dbReference type="NCBI Taxonomy" id="1392"/>
    <lineage>
        <taxon>Bacteria</taxon>
        <taxon>Bacillati</taxon>
        <taxon>Bacillota</taxon>
        <taxon>Bacilli</taxon>
        <taxon>Bacillales</taxon>
        <taxon>Bacillaceae</taxon>
        <taxon>Bacillus</taxon>
        <taxon>Bacillus cereus group</taxon>
    </lineage>
</organism>
<proteinExistence type="inferred from homology"/>
<protein>
    <recommendedName>
        <fullName evidence="1">2,3-diketo-5-methylthiopentyl-1-phosphate enolase</fullName>
        <shortName evidence="1">DK-MTP-1-P enolase</shortName>
        <ecNumber evidence="1">5.3.2.5</ecNumber>
    </recommendedName>
    <alternativeName>
        <fullName evidence="1">RuBisCO-like protein</fullName>
        <shortName evidence="1">RLP</shortName>
    </alternativeName>
</protein>
<reference key="1">
    <citation type="journal article" date="2003" name="Nature">
        <title>The genome sequence of Bacillus anthracis Ames and comparison to closely related bacteria.</title>
        <authorList>
            <person name="Read T.D."/>
            <person name="Peterson S.N."/>
            <person name="Tourasse N.J."/>
            <person name="Baillie L.W."/>
            <person name="Paulsen I.T."/>
            <person name="Nelson K.E."/>
            <person name="Tettelin H."/>
            <person name="Fouts D.E."/>
            <person name="Eisen J.A."/>
            <person name="Gill S.R."/>
            <person name="Holtzapple E.K."/>
            <person name="Okstad O.A."/>
            <person name="Helgason E."/>
            <person name="Rilstone J."/>
            <person name="Wu M."/>
            <person name="Kolonay J.F."/>
            <person name="Beanan M.J."/>
            <person name="Dodson R.J."/>
            <person name="Brinkac L.M."/>
            <person name="Gwinn M.L."/>
            <person name="DeBoy R.T."/>
            <person name="Madpu R."/>
            <person name="Daugherty S.C."/>
            <person name="Durkin A.S."/>
            <person name="Haft D.H."/>
            <person name="Nelson W.C."/>
            <person name="Peterson J.D."/>
            <person name="Pop M."/>
            <person name="Khouri H.M."/>
            <person name="Radune D."/>
            <person name="Benton J.L."/>
            <person name="Mahamoud Y."/>
            <person name="Jiang L."/>
            <person name="Hance I.R."/>
            <person name="Weidman J.F."/>
            <person name="Berry K.J."/>
            <person name="Plaut R.D."/>
            <person name="Wolf A.M."/>
            <person name="Watkins K.L."/>
            <person name="Nierman W.C."/>
            <person name="Hazen A."/>
            <person name="Cline R.T."/>
            <person name="Redmond C."/>
            <person name="Thwaite J.E."/>
            <person name="White O."/>
            <person name="Salzberg S.L."/>
            <person name="Thomason B."/>
            <person name="Friedlander A.M."/>
            <person name="Koehler T.M."/>
            <person name="Hanna P.C."/>
            <person name="Kolstoe A.-B."/>
            <person name="Fraser C.M."/>
        </authorList>
    </citation>
    <scope>NUCLEOTIDE SEQUENCE [LARGE SCALE GENOMIC DNA]</scope>
    <source>
        <strain>Ames / isolate Porton</strain>
    </source>
</reference>
<reference key="2">
    <citation type="journal article" date="2009" name="J. Bacteriol.">
        <title>The complete genome sequence of Bacillus anthracis Ames 'Ancestor'.</title>
        <authorList>
            <person name="Ravel J."/>
            <person name="Jiang L."/>
            <person name="Stanley S.T."/>
            <person name="Wilson M.R."/>
            <person name="Decker R.S."/>
            <person name="Read T.D."/>
            <person name="Worsham P."/>
            <person name="Keim P.S."/>
            <person name="Salzberg S.L."/>
            <person name="Fraser-Liggett C.M."/>
            <person name="Rasko D.A."/>
        </authorList>
    </citation>
    <scope>NUCLEOTIDE SEQUENCE [LARGE SCALE GENOMIC DNA]</scope>
    <source>
        <strain>Ames ancestor</strain>
    </source>
</reference>
<reference key="3">
    <citation type="submission" date="2004-01" db="EMBL/GenBank/DDBJ databases">
        <title>Complete genome sequence of Bacillus anthracis Sterne.</title>
        <authorList>
            <person name="Brettin T.S."/>
            <person name="Bruce D."/>
            <person name="Challacombe J.F."/>
            <person name="Gilna P."/>
            <person name="Han C."/>
            <person name="Hill K."/>
            <person name="Hitchcock P."/>
            <person name="Jackson P."/>
            <person name="Keim P."/>
            <person name="Longmire J."/>
            <person name="Lucas S."/>
            <person name="Okinaka R."/>
            <person name="Richardson P."/>
            <person name="Rubin E."/>
            <person name="Tice H."/>
        </authorList>
    </citation>
    <scope>NUCLEOTIDE SEQUENCE [LARGE SCALE GENOMIC DNA]</scope>
    <source>
        <strain>Sterne</strain>
    </source>
</reference>
<feature type="chain" id="PRO_0000062687" description="2,3-diketo-5-methylthiopentyl-1-phosphate enolase">
    <location>
        <begin position="1"/>
        <end position="414"/>
    </location>
</feature>
<feature type="active site" description="Proton acceptor" evidence="1">
    <location>
        <position position="99"/>
    </location>
</feature>
<feature type="binding site" evidence="1">
    <location>
        <position position="148"/>
    </location>
    <ligand>
        <name>substrate</name>
    </ligand>
</feature>
<feature type="binding site" evidence="1">
    <location>
        <begin position="174"/>
        <end position="177"/>
    </location>
    <ligand>
        <name>substrate</name>
    </ligand>
</feature>
<feature type="binding site" description="via carbamate group" evidence="1">
    <location>
        <position position="174"/>
    </location>
    <ligand>
        <name>Mg(2+)</name>
        <dbReference type="ChEBI" id="CHEBI:18420"/>
    </ligand>
</feature>
<feature type="binding site" evidence="1">
    <location>
        <position position="176"/>
    </location>
    <ligand>
        <name>Mg(2+)</name>
        <dbReference type="ChEBI" id="CHEBI:18420"/>
    </ligand>
</feature>
<feature type="binding site" evidence="1">
    <location>
        <position position="177"/>
    </location>
    <ligand>
        <name>Mg(2+)</name>
        <dbReference type="ChEBI" id="CHEBI:18420"/>
    </ligand>
</feature>
<feature type="binding site" evidence="1">
    <location>
        <position position="265"/>
    </location>
    <ligand>
        <name>substrate</name>
    </ligand>
</feature>
<feature type="binding site" evidence="1">
    <location>
        <position position="338"/>
    </location>
    <ligand>
        <name>substrate</name>
    </ligand>
</feature>
<feature type="binding site" evidence="1">
    <location>
        <begin position="360"/>
        <end position="361"/>
    </location>
    <ligand>
        <name>substrate</name>
    </ligand>
</feature>
<feature type="modified residue" description="N6-carboxylysine" evidence="1">
    <location>
        <position position="174"/>
    </location>
</feature>
<keyword id="KW-0028">Amino-acid biosynthesis</keyword>
<keyword id="KW-0413">Isomerase</keyword>
<keyword id="KW-0460">Magnesium</keyword>
<keyword id="KW-0479">Metal-binding</keyword>
<keyword id="KW-0486">Methionine biosynthesis</keyword>
<keyword id="KW-1185">Reference proteome</keyword>
<sequence>MSGIIATYLIHDDSHNLEKKAEQIALGLTIGSWTHLPHLLQEQLKQHKGNVLHVEELAEHEHTNSYLRKKVKRGIIKIEYPLLNFSPDLPAILTTTFGKLSLDGEVKLIDLTFSDELKKHFPGPKFGIDGIRNLLQVHDRPLLMSIFKGMIGRNIGYLKTQLRDQAIGGVDIVKDDEILFENALTPLTNRIVSGKEVLQSVYETYGHKTLYAVNVTGRTFDLKENAKRAVQAGADILLFNVFAYGLDVLQSLAEDDEIPVPIMAHPAVSGAYSASKLYGISSPLLLGKLLRYAGADFSLFPSPYGSVALEKEEALAISKYLTEDDVFFKKSFSVPSAGIHPGFVPFIIRDFGKDVVINAGGGIHGHPNGAQGGGKAFRTAIDATLQNKPLHEVDDINLHSALQIWGNPSHEVKL</sequence>
<evidence type="ECO:0000255" key="1">
    <source>
        <dbReference type="HAMAP-Rule" id="MF_01679"/>
    </source>
</evidence>
<dbReference type="EC" id="5.3.2.5" evidence="1"/>
<dbReference type="EMBL" id="AE016879">
    <property type="protein sequence ID" value="AAP27976.1"/>
    <property type="molecule type" value="Genomic_DNA"/>
</dbReference>
<dbReference type="EMBL" id="AE017334">
    <property type="protein sequence ID" value="AAT33372.1"/>
    <property type="molecule type" value="Genomic_DNA"/>
</dbReference>
<dbReference type="EMBL" id="AE017225">
    <property type="protein sequence ID" value="AAT56247.1"/>
    <property type="molecule type" value="Genomic_DNA"/>
</dbReference>
<dbReference type="RefSeq" id="NP_846490.1">
    <property type="nucleotide sequence ID" value="NC_003997.3"/>
</dbReference>
<dbReference type="RefSeq" id="WP_000014200.1">
    <property type="nucleotide sequence ID" value="NZ_WXXJ01000027.1"/>
</dbReference>
<dbReference type="RefSeq" id="YP_030196.1">
    <property type="nucleotide sequence ID" value="NC_005945.1"/>
</dbReference>
<dbReference type="SMR" id="Q81MJ2"/>
<dbReference type="STRING" id="261594.GBAA_4255"/>
<dbReference type="DNASU" id="1088830"/>
<dbReference type="GeneID" id="45023926"/>
<dbReference type="KEGG" id="ban:BA_4255"/>
<dbReference type="KEGG" id="banh:HYU01_20790"/>
<dbReference type="KEGG" id="bar:GBAA_4255"/>
<dbReference type="KEGG" id="bat:BAS3946"/>
<dbReference type="PATRIC" id="fig|198094.11.peg.4225"/>
<dbReference type="eggNOG" id="COG1850">
    <property type="taxonomic scope" value="Bacteria"/>
</dbReference>
<dbReference type="HOGENOM" id="CLU_031450_3_1_9"/>
<dbReference type="OMA" id="IHGHPDG"/>
<dbReference type="OrthoDB" id="9770811at2"/>
<dbReference type="UniPathway" id="UPA00904">
    <property type="reaction ID" value="UER00876"/>
</dbReference>
<dbReference type="Proteomes" id="UP000000427">
    <property type="component" value="Chromosome"/>
</dbReference>
<dbReference type="Proteomes" id="UP000000594">
    <property type="component" value="Chromosome"/>
</dbReference>
<dbReference type="GO" id="GO:0043715">
    <property type="term" value="F:2,3-diketo-5-methylthiopentyl-1-phosphate enolase activity"/>
    <property type="evidence" value="ECO:0007669"/>
    <property type="project" value="UniProtKB-UniRule"/>
</dbReference>
<dbReference type="GO" id="GO:0000287">
    <property type="term" value="F:magnesium ion binding"/>
    <property type="evidence" value="ECO:0007669"/>
    <property type="project" value="UniProtKB-UniRule"/>
</dbReference>
<dbReference type="GO" id="GO:0016984">
    <property type="term" value="F:ribulose-bisphosphate carboxylase activity"/>
    <property type="evidence" value="ECO:0007669"/>
    <property type="project" value="InterPro"/>
</dbReference>
<dbReference type="GO" id="GO:0015977">
    <property type="term" value="P:carbon fixation"/>
    <property type="evidence" value="ECO:0007669"/>
    <property type="project" value="InterPro"/>
</dbReference>
<dbReference type="GO" id="GO:0019509">
    <property type="term" value="P:L-methionine salvage from methylthioadenosine"/>
    <property type="evidence" value="ECO:0007669"/>
    <property type="project" value="UniProtKB-UniRule"/>
</dbReference>
<dbReference type="CDD" id="cd08209">
    <property type="entry name" value="RLP_DK-MTP-1-P-enolase"/>
    <property type="match status" value="1"/>
</dbReference>
<dbReference type="FunFam" id="3.20.20.110:FF:000002">
    <property type="entry name" value="2,3-diketo-5-methylthiopentyl-1-phosphate enolase"/>
    <property type="match status" value="1"/>
</dbReference>
<dbReference type="Gene3D" id="3.20.20.110">
    <property type="entry name" value="Ribulose bisphosphate carboxylase, large subunit, C-terminal domain"/>
    <property type="match status" value="1"/>
</dbReference>
<dbReference type="Gene3D" id="3.30.70.150">
    <property type="entry name" value="RuBisCO large subunit, N-terminal domain"/>
    <property type="match status" value="1"/>
</dbReference>
<dbReference type="HAMAP" id="MF_01679">
    <property type="entry name" value="Salvage_MtnW"/>
    <property type="match status" value="1"/>
</dbReference>
<dbReference type="InterPro" id="IPR017717">
    <property type="entry name" value="Diketo-Methiopentyl-P_enolase"/>
</dbReference>
<dbReference type="InterPro" id="IPR033966">
    <property type="entry name" value="RuBisCO"/>
</dbReference>
<dbReference type="InterPro" id="IPR000685">
    <property type="entry name" value="RuBisCO_lsu_C"/>
</dbReference>
<dbReference type="InterPro" id="IPR036376">
    <property type="entry name" value="RuBisCO_lsu_C_sf"/>
</dbReference>
<dbReference type="InterPro" id="IPR017443">
    <property type="entry name" value="RuBisCO_lsu_fd_N"/>
</dbReference>
<dbReference type="InterPro" id="IPR036422">
    <property type="entry name" value="RuBisCO_lsu_N_sf"/>
</dbReference>
<dbReference type="NCBIfam" id="NF007095">
    <property type="entry name" value="PRK09549.1"/>
    <property type="match status" value="1"/>
</dbReference>
<dbReference type="NCBIfam" id="TIGR03332">
    <property type="entry name" value="salvage_mtnW"/>
    <property type="match status" value="1"/>
</dbReference>
<dbReference type="PANTHER" id="PTHR42704">
    <property type="entry name" value="RIBULOSE BISPHOSPHATE CARBOXYLASE"/>
    <property type="match status" value="1"/>
</dbReference>
<dbReference type="PANTHER" id="PTHR42704:SF17">
    <property type="entry name" value="RIBULOSE BISPHOSPHATE CARBOXYLASE LARGE CHAIN"/>
    <property type="match status" value="1"/>
</dbReference>
<dbReference type="Pfam" id="PF00016">
    <property type="entry name" value="RuBisCO_large"/>
    <property type="match status" value="1"/>
</dbReference>
<dbReference type="Pfam" id="PF02788">
    <property type="entry name" value="RuBisCO_large_N"/>
    <property type="match status" value="1"/>
</dbReference>
<dbReference type="SFLD" id="SFLDF00157">
    <property type="entry name" value="2_3-diketo-5-methylthiopentyl"/>
    <property type="match status" value="1"/>
</dbReference>
<dbReference type="SFLD" id="SFLDS00014">
    <property type="entry name" value="RuBisCO"/>
    <property type="match status" value="1"/>
</dbReference>
<dbReference type="SUPFAM" id="SSF51649">
    <property type="entry name" value="RuBisCo, C-terminal domain"/>
    <property type="match status" value="1"/>
</dbReference>
<dbReference type="SUPFAM" id="SSF54966">
    <property type="entry name" value="RuBisCO, large subunit, small (N-terminal) domain"/>
    <property type="match status" value="1"/>
</dbReference>
<comment type="function">
    <text evidence="1">Catalyzes the enolization of 2,3-diketo-5-methylthiopentyl-1-phosphate (DK-MTP-1-P) into 2-hydroxy-3-keto-5-methylthiopentenyl-1-phosphate (HK-MTPenyl-1-P).</text>
</comment>
<comment type="catalytic activity">
    <reaction evidence="1">
        <text>5-methylsulfanyl-2,3-dioxopentyl phosphate = 2-hydroxy-5-methylsulfanyl-3-oxopent-1-enyl phosphate</text>
        <dbReference type="Rhea" id="RHEA:18769"/>
        <dbReference type="ChEBI" id="CHEBI:58828"/>
        <dbReference type="ChEBI" id="CHEBI:59505"/>
        <dbReference type="EC" id="5.3.2.5"/>
    </reaction>
</comment>
<comment type="cofactor">
    <cofactor evidence="1">
        <name>Mg(2+)</name>
        <dbReference type="ChEBI" id="CHEBI:18420"/>
    </cofactor>
    <text evidence="1">Binds 1 Mg(2+) ion per subunit.</text>
</comment>
<comment type="pathway">
    <text evidence="1">Amino-acid biosynthesis; L-methionine biosynthesis via salvage pathway; L-methionine from S-methyl-5-thio-alpha-D-ribose 1-phosphate: step 3/6.</text>
</comment>
<comment type="subunit">
    <text evidence="1">Homodimer.</text>
</comment>
<comment type="miscellaneous">
    <text evidence="1">Has no RuBP-carboxylation activity.</text>
</comment>
<comment type="similarity">
    <text evidence="1">Belongs to the RuBisCO large chain family. Type IV subfamily.</text>
</comment>
<gene>
    <name evidence="1" type="primary">mtnW</name>
    <name type="ordered locus">BA_4255</name>
    <name type="ordered locus">GBAA_4255</name>
    <name type="ordered locus">BAS3946</name>
</gene>